<comment type="function">
    <text evidence="1">Catalyzes the attachment of proline to tRNA(Pro) in a two-step reaction: proline is first activated by ATP to form Pro-AMP and then transferred to the acceptor end of tRNA(Pro). As ProRS can inadvertently accommodate and process non-cognate amino acids such as alanine and cysteine, to avoid such errors it has two additional distinct editing activities against alanine. One activity is designated as 'pretransfer' editing and involves the tRNA(Pro)-independent hydrolysis of activated Ala-AMP. The other activity is designated 'posttransfer' editing and involves deacylation of mischarged Ala-tRNA(Pro). The misacylated Cys-tRNA(Pro) is not edited by ProRS.</text>
</comment>
<comment type="catalytic activity">
    <reaction evidence="1">
        <text>tRNA(Pro) + L-proline + ATP = L-prolyl-tRNA(Pro) + AMP + diphosphate</text>
        <dbReference type="Rhea" id="RHEA:14305"/>
        <dbReference type="Rhea" id="RHEA-COMP:9700"/>
        <dbReference type="Rhea" id="RHEA-COMP:9702"/>
        <dbReference type="ChEBI" id="CHEBI:30616"/>
        <dbReference type="ChEBI" id="CHEBI:33019"/>
        <dbReference type="ChEBI" id="CHEBI:60039"/>
        <dbReference type="ChEBI" id="CHEBI:78442"/>
        <dbReference type="ChEBI" id="CHEBI:78532"/>
        <dbReference type="ChEBI" id="CHEBI:456215"/>
        <dbReference type="EC" id="6.1.1.15"/>
    </reaction>
</comment>
<comment type="subunit">
    <text evidence="1">Homodimer.</text>
</comment>
<comment type="subcellular location">
    <subcellularLocation>
        <location evidence="1">Cytoplasm</location>
    </subcellularLocation>
</comment>
<comment type="domain">
    <text evidence="1">Consists of three domains: the N-terminal catalytic domain, the editing domain and the C-terminal anticodon-binding domain.</text>
</comment>
<comment type="similarity">
    <text evidence="1">Belongs to the class-II aminoacyl-tRNA synthetase family. ProS type 1 subfamily.</text>
</comment>
<accession>A1WKI1</accession>
<proteinExistence type="inferred from homology"/>
<name>SYP_VEREI</name>
<sequence>MKASRFFVSTLKDAPADAEVVSHQLMMRAGLIKKLGAGIYSYMPMGLRVLRKIEAIVREEMNRAGAVELTMPVVQPAELWQETGRFDKMGPELLRIQDRHGRDFVVQPTSEEVITDIARQELRSYKQLPKNFYQIQTKFRDERRPRFGLMRGREFIMKDAYSFDRDPAAAKASYLVMEQAYRRIFDRFGLTYRAVAADSGAIGGDLSEEFQVVAATGEDAIVYCPQSDYAANMEKAEALAPSGVRGAATRALNKTSTPDKSTCAEVAQWLGVPLQSTVKSLVMATDEAQAADGSVKSQVWLLLLRGDHDMNQVKVAKLPGLGQGLRFATLDEIEAHFGCQPGYLGPIGLQKPLKIVADRDVALMADWICGANEAHWHLTGVNWGRDLPEPDMVADLRNVVAGDRSPDGKGVLAIERGIEVGHVFYLGTKYSRAMNASFLDENGKPQPLEMGCYGIGITRLPAAAIEQNHDARGIIWPDAIAPFTAVICPIGMERSAAVQAAADKLYADFLAAGIDVLLDDRGERPGAMFADWELIGVPHRVVISERGLKEDQLEYQHRRDQSATKVAAADILAHVKGRMTV</sequence>
<keyword id="KW-0030">Aminoacyl-tRNA synthetase</keyword>
<keyword id="KW-0067">ATP-binding</keyword>
<keyword id="KW-0963">Cytoplasm</keyword>
<keyword id="KW-0436">Ligase</keyword>
<keyword id="KW-0547">Nucleotide-binding</keyword>
<keyword id="KW-0648">Protein biosynthesis</keyword>
<keyword id="KW-1185">Reference proteome</keyword>
<gene>
    <name evidence="1" type="primary">proS</name>
    <name type="ordered locus">Veis_2392</name>
</gene>
<dbReference type="EC" id="6.1.1.15" evidence="1"/>
<dbReference type="EMBL" id="CP000542">
    <property type="protein sequence ID" value="ABM58138.1"/>
    <property type="molecule type" value="Genomic_DNA"/>
</dbReference>
<dbReference type="RefSeq" id="WP_011810141.1">
    <property type="nucleotide sequence ID" value="NC_008786.1"/>
</dbReference>
<dbReference type="SMR" id="A1WKI1"/>
<dbReference type="STRING" id="391735.Veis_2392"/>
<dbReference type="GeneID" id="76460954"/>
<dbReference type="KEGG" id="vei:Veis_2392"/>
<dbReference type="eggNOG" id="COG0442">
    <property type="taxonomic scope" value="Bacteria"/>
</dbReference>
<dbReference type="HOGENOM" id="CLU_016739_0_0_4"/>
<dbReference type="OrthoDB" id="9809052at2"/>
<dbReference type="Proteomes" id="UP000000374">
    <property type="component" value="Chromosome"/>
</dbReference>
<dbReference type="GO" id="GO:0005829">
    <property type="term" value="C:cytosol"/>
    <property type="evidence" value="ECO:0007669"/>
    <property type="project" value="TreeGrafter"/>
</dbReference>
<dbReference type="GO" id="GO:0002161">
    <property type="term" value="F:aminoacyl-tRNA deacylase activity"/>
    <property type="evidence" value="ECO:0007669"/>
    <property type="project" value="InterPro"/>
</dbReference>
<dbReference type="GO" id="GO:0005524">
    <property type="term" value="F:ATP binding"/>
    <property type="evidence" value="ECO:0007669"/>
    <property type="project" value="UniProtKB-UniRule"/>
</dbReference>
<dbReference type="GO" id="GO:0004827">
    <property type="term" value="F:proline-tRNA ligase activity"/>
    <property type="evidence" value="ECO:0007669"/>
    <property type="project" value="UniProtKB-UniRule"/>
</dbReference>
<dbReference type="GO" id="GO:0006433">
    <property type="term" value="P:prolyl-tRNA aminoacylation"/>
    <property type="evidence" value="ECO:0007669"/>
    <property type="project" value="UniProtKB-UniRule"/>
</dbReference>
<dbReference type="CDD" id="cd04334">
    <property type="entry name" value="ProRS-INS"/>
    <property type="match status" value="1"/>
</dbReference>
<dbReference type="CDD" id="cd00861">
    <property type="entry name" value="ProRS_anticodon_short"/>
    <property type="match status" value="1"/>
</dbReference>
<dbReference type="CDD" id="cd00779">
    <property type="entry name" value="ProRS_core_prok"/>
    <property type="match status" value="1"/>
</dbReference>
<dbReference type="FunFam" id="3.30.930.10:FF:000042">
    <property type="entry name" value="probable proline--tRNA ligase, mitochondrial"/>
    <property type="match status" value="1"/>
</dbReference>
<dbReference type="FunFam" id="3.30.930.10:FF:000097">
    <property type="entry name" value="Proline--tRNA ligase"/>
    <property type="match status" value="1"/>
</dbReference>
<dbReference type="Gene3D" id="3.40.50.800">
    <property type="entry name" value="Anticodon-binding domain"/>
    <property type="match status" value="1"/>
</dbReference>
<dbReference type="Gene3D" id="3.30.930.10">
    <property type="entry name" value="Bira Bifunctional Protein, Domain 2"/>
    <property type="match status" value="2"/>
</dbReference>
<dbReference type="Gene3D" id="3.90.960.10">
    <property type="entry name" value="YbaK/aminoacyl-tRNA synthetase-associated domain"/>
    <property type="match status" value="1"/>
</dbReference>
<dbReference type="HAMAP" id="MF_01569">
    <property type="entry name" value="Pro_tRNA_synth_type1"/>
    <property type="match status" value="1"/>
</dbReference>
<dbReference type="InterPro" id="IPR002314">
    <property type="entry name" value="aa-tRNA-synt_IIb"/>
</dbReference>
<dbReference type="InterPro" id="IPR006195">
    <property type="entry name" value="aa-tRNA-synth_II"/>
</dbReference>
<dbReference type="InterPro" id="IPR045864">
    <property type="entry name" value="aa-tRNA-synth_II/BPL/LPL"/>
</dbReference>
<dbReference type="InterPro" id="IPR004154">
    <property type="entry name" value="Anticodon-bd"/>
</dbReference>
<dbReference type="InterPro" id="IPR036621">
    <property type="entry name" value="Anticodon-bd_dom_sf"/>
</dbReference>
<dbReference type="InterPro" id="IPR002316">
    <property type="entry name" value="Pro-tRNA-ligase_IIa"/>
</dbReference>
<dbReference type="InterPro" id="IPR004500">
    <property type="entry name" value="Pro-tRNA-synth_IIa_bac-type"/>
</dbReference>
<dbReference type="InterPro" id="IPR023717">
    <property type="entry name" value="Pro-tRNA-Synthase_IIa_type1"/>
</dbReference>
<dbReference type="InterPro" id="IPR050062">
    <property type="entry name" value="Pro-tRNA_synthetase"/>
</dbReference>
<dbReference type="InterPro" id="IPR044140">
    <property type="entry name" value="ProRS_anticodon_short"/>
</dbReference>
<dbReference type="InterPro" id="IPR033730">
    <property type="entry name" value="ProRS_core_prok"/>
</dbReference>
<dbReference type="InterPro" id="IPR036754">
    <property type="entry name" value="YbaK/aa-tRNA-synt-asso_dom_sf"/>
</dbReference>
<dbReference type="InterPro" id="IPR007214">
    <property type="entry name" value="YbaK/aa-tRNA-synth-assoc-dom"/>
</dbReference>
<dbReference type="NCBIfam" id="NF006625">
    <property type="entry name" value="PRK09194.1"/>
    <property type="match status" value="1"/>
</dbReference>
<dbReference type="NCBIfam" id="TIGR00409">
    <property type="entry name" value="proS_fam_II"/>
    <property type="match status" value="1"/>
</dbReference>
<dbReference type="PANTHER" id="PTHR42753">
    <property type="entry name" value="MITOCHONDRIAL RIBOSOME PROTEIN L39/PROLYL-TRNA LIGASE FAMILY MEMBER"/>
    <property type="match status" value="1"/>
</dbReference>
<dbReference type="PANTHER" id="PTHR42753:SF2">
    <property type="entry name" value="PROLINE--TRNA LIGASE"/>
    <property type="match status" value="1"/>
</dbReference>
<dbReference type="Pfam" id="PF03129">
    <property type="entry name" value="HGTP_anticodon"/>
    <property type="match status" value="1"/>
</dbReference>
<dbReference type="Pfam" id="PF00587">
    <property type="entry name" value="tRNA-synt_2b"/>
    <property type="match status" value="1"/>
</dbReference>
<dbReference type="Pfam" id="PF04073">
    <property type="entry name" value="tRNA_edit"/>
    <property type="match status" value="1"/>
</dbReference>
<dbReference type="PIRSF" id="PIRSF001535">
    <property type="entry name" value="ProRS_1"/>
    <property type="match status" value="1"/>
</dbReference>
<dbReference type="PRINTS" id="PR01046">
    <property type="entry name" value="TRNASYNTHPRO"/>
</dbReference>
<dbReference type="SUPFAM" id="SSF52954">
    <property type="entry name" value="Class II aaRS ABD-related"/>
    <property type="match status" value="1"/>
</dbReference>
<dbReference type="SUPFAM" id="SSF55681">
    <property type="entry name" value="Class II aaRS and biotin synthetases"/>
    <property type="match status" value="1"/>
</dbReference>
<dbReference type="SUPFAM" id="SSF55826">
    <property type="entry name" value="YbaK/ProRS associated domain"/>
    <property type="match status" value="1"/>
</dbReference>
<dbReference type="PROSITE" id="PS50862">
    <property type="entry name" value="AA_TRNA_LIGASE_II"/>
    <property type="match status" value="1"/>
</dbReference>
<protein>
    <recommendedName>
        <fullName evidence="1">Proline--tRNA ligase</fullName>
        <ecNumber evidence="1">6.1.1.15</ecNumber>
    </recommendedName>
    <alternativeName>
        <fullName evidence="1">Prolyl-tRNA synthetase</fullName>
        <shortName evidence="1">ProRS</shortName>
    </alternativeName>
</protein>
<organism>
    <name type="scientific">Verminephrobacter eiseniae (strain EF01-2)</name>
    <dbReference type="NCBI Taxonomy" id="391735"/>
    <lineage>
        <taxon>Bacteria</taxon>
        <taxon>Pseudomonadati</taxon>
        <taxon>Pseudomonadota</taxon>
        <taxon>Betaproteobacteria</taxon>
        <taxon>Burkholderiales</taxon>
        <taxon>Comamonadaceae</taxon>
        <taxon>Verminephrobacter</taxon>
    </lineage>
</organism>
<feature type="chain" id="PRO_0000288389" description="Proline--tRNA ligase">
    <location>
        <begin position="1"/>
        <end position="581"/>
    </location>
</feature>
<evidence type="ECO:0000255" key="1">
    <source>
        <dbReference type="HAMAP-Rule" id="MF_01569"/>
    </source>
</evidence>
<reference key="1">
    <citation type="submission" date="2006-12" db="EMBL/GenBank/DDBJ databases">
        <title>Complete sequence of chromosome 1 of Verminephrobacter eiseniae EF01-2.</title>
        <authorList>
            <person name="Copeland A."/>
            <person name="Lucas S."/>
            <person name="Lapidus A."/>
            <person name="Barry K."/>
            <person name="Detter J.C."/>
            <person name="Glavina del Rio T."/>
            <person name="Dalin E."/>
            <person name="Tice H."/>
            <person name="Pitluck S."/>
            <person name="Chertkov O."/>
            <person name="Brettin T."/>
            <person name="Bruce D."/>
            <person name="Han C."/>
            <person name="Tapia R."/>
            <person name="Gilna P."/>
            <person name="Schmutz J."/>
            <person name="Larimer F."/>
            <person name="Land M."/>
            <person name="Hauser L."/>
            <person name="Kyrpides N."/>
            <person name="Kim E."/>
            <person name="Stahl D."/>
            <person name="Richardson P."/>
        </authorList>
    </citation>
    <scope>NUCLEOTIDE SEQUENCE [LARGE SCALE GENOMIC DNA]</scope>
    <source>
        <strain>EF01-2</strain>
    </source>
</reference>